<name>TRMB_RALPJ</name>
<reference key="1">
    <citation type="submission" date="2008-05" db="EMBL/GenBank/DDBJ databases">
        <title>Complete sequence of chromosome 1 of Ralstonia pickettii 12J.</title>
        <authorList>
            <person name="Lucas S."/>
            <person name="Copeland A."/>
            <person name="Lapidus A."/>
            <person name="Glavina del Rio T."/>
            <person name="Dalin E."/>
            <person name="Tice H."/>
            <person name="Bruce D."/>
            <person name="Goodwin L."/>
            <person name="Pitluck S."/>
            <person name="Meincke L."/>
            <person name="Brettin T."/>
            <person name="Detter J.C."/>
            <person name="Han C."/>
            <person name="Kuske C.R."/>
            <person name="Schmutz J."/>
            <person name="Larimer F."/>
            <person name="Land M."/>
            <person name="Hauser L."/>
            <person name="Kyrpides N."/>
            <person name="Mikhailova N."/>
            <person name="Marsh T."/>
            <person name="Richardson P."/>
        </authorList>
    </citation>
    <scope>NUCLEOTIDE SEQUENCE [LARGE SCALE GENOMIC DNA]</scope>
    <source>
        <strain>12J</strain>
    </source>
</reference>
<gene>
    <name evidence="2" type="primary">trmB</name>
    <name type="ordered locus">Rpic_0653</name>
</gene>
<feature type="chain" id="PRO_1000136360" description="tRNA (guanine-N(7)-)-methyltransferase">
    <location>
        <begin position="1"/>
        <end position="257"/>
    </location>
</feature>
<feature type="region of interest" description="Disordered" evidence="3">
    <location>
        <begin position="1"/>
        <end position="58"/>
    </location>
</feature>
<feature type="region of interest" description="Interaction with RNA" evidence="2">
    <location>
        <begin position="170"/>
        <end position="175"/>
    </location>
</feature>
<feature type="compositionally biased region" description="Polar residues" evidence="3">
    <location>
        <begin position="16"/>
        <end position="26"/>
    </location>
</feature>
<feature type="compositionally biased region" description="Basic residues" evidence="3">
    <location>
        <begin position="36"/>
        <end position="47"/>
    </location>
</feature>
<feature type="active site" evidence="1">
    <location>
        <position position="164"/>
    </location>
</feature>
<feature type="binding site" evidence="2">
    <location>
        <position position="89"/>
    </location>
    <ligand>
        <name>S-adenosyl-L-methionine</name>
        <dbReference type="ChEBI" id="CHEBI:59789"/>
    </ligand>
</feature>
<feature type="binding site" evidence="2">
    <location>
        <position position="114"/>
    </location>
    <ligand>
        <name>S-adenosyl-L-methionine</name>
        <dbReference type="ChEBI" id="CHEBI:59789"/>
    </ligand>
</feature>
<feature type="binding site" evidence="2">
    <location>
        <position position="141"/>
    </location>
    <ligand>
        <name>S-adenosyl-L-methionine</name>
        <dbReference type="ChEBI" id="CHEBI:59789"/>
    </ligand>
</feature>
<feature type="binding site" evidence="2">
    <location>
        <position position="164"/>
    </location>
    <ligand>
        <name>S-adenosyl-L-methionine</name>
        <dbReference type="ChEBI" id="CHEBI:59789"/>
    </ligand>
</feature>
<feature type="binding site" evidence="2">
    <location>
        <position position="168"/>
    </location>
    <ligand>
        <name>substrate</name>
    </ligand>
</feature>
<feature type="binding site" evidence="2">
    <location>
        <position position="200"/>
    </location>
    <ligand>
        <name>substrate</name>
    </ligand>
</feature>
<feature type="binding site" evidence="2">
    <location>
        <begin position="235"/>
        <end position="238"/>
    </location>
    <ligand>
        <name>substrate</name>
    </ligand>
</feature>
<evidence type="ECO:0000250" key="1"/>
<evidence type="ECO:0000255" key="2">
    <source>
        <dbReference type="HAMAP-Rule" id="MF_01057"/>
    </source>
</evidence>
<evidence type="ECO:0000256" key="3">
    <source>
        <dbReference type="SAM" id="MobiDB-lite"/>
    </source>
</evidence>
<organism>
    <name type="scientific">Ralstonia pickettii (strain 12J)</name>
    <dbReference type="NCBI Taxonomy" id="402626"/>
    <lineage>
        <taxon>Bacteria</taxon>
        <taxon>Pseudomonadati</taxon>
        <taxon>Pseudomonadota</taxon>
        <taxon>Betaproteobacteria</taxon>
        <taxon>Burkholderiales</taxon>
        <taxon>Burkholderiaceae</taxon>
        <taxon>Ralstonia</taxon>
    </lineage>
</organism>
<proteinExistence type="inferred from homology"/>
<sequence>MQPIEQPGTGPDDITPESQDTNTAESAESGAETGHPRRIRSFVRRAGRTSTGQQRAINELGPRFQLPYTTEPLDWDAAFGRAGAKRIFEIGFGMGETTAHIAQLRPDDDFLGVEVHEPGVGALLKLIGEREIGNIRIVSHDAVEVLAQMIPEGTLDGIHVFFPDPWHKKRHNKRRLIQSPFVARLAAHLKPGGYLHCATDWEEYAHQMLEVLSSEPTLENTADGFAPRPDYRPVTKFEKRGLRLGHGVWDVVFRKRG</sequence>
<protein>
    <recommendedName>
        <fullName evidence="2">tRNA (guanine-N(7)-)-methyltransferase</fullName>
        <ecNumber evidence="2">2.1.1.33</ecNumber>
    </recommendedName>
    <alternativeName>
        <fullName evidence="2">tRNA (guanine(46)-N(7))-methyltransferase</fullName>
    </alternativeName>
    <alternativeName>
        <fullName evidence="2">tRNA(m7G46)-methyltransferase</fullName>
    </alternativeName>
</protein>
<dbReference type="EC" id="2.1.1.33" evidence="2"/>
<dbReference type="EMBL" id="CP001068">
    <property type="protein sequence ID" value="ACD25804.1"/>
    <property type="molecule type" value="Genomic_DNA"/>
</dbReference>
<dbReference type="SMR" id="B2U7E2"/>
<dbReference type="STRING" id="402626.Rpic_0653"/>
<dbReference type="KEGG" id="rpi:Rpic_0653"/>
<dbReference type="eggNOG" id="COG0220">
    <property type="taxonomic scope" value="Bacteria"/>
</dbReference>
<dbReference type="HOGENOM" id="CLU_050910_0_1_4"/>
<dbReference type="UniPathway" id="UPA00989"/>
<dbReference type="GO" id="GO:0043527">
    <property type="term" value="C:tRNA methyltransferase complex"/>
    <property type="evidence" value="ECO:0007669"/>
    <property type="project" value="TreeGrafter"/>
</dbReference>
<dbReference type="GO" id="GO:0008176">
    <property type="term" value="F:tRNA (guanine(46)-N7)-methyltransferase activity"/>
    <property type="evidence" value="ECO:0007669"/>
    <property type="project" value="UniProtKB-UniRule"/>
</dbReference>
<dbReference type="CDD" id="cd02440">
    <property type="entry name" value="AdoMet_MTases"/>
    <property type="match status" value="1"/>
</dbReference>
<dbReference type="FunFam" id="3.40.50.150:FF:000035">
    <property type="entry name" value="tRNA (guanine-N(7)-)-methyltransferase"/>
    <property type="match status" value="1"/>
</dbReference>
<dbReference type="Gene3D" id="3.40.50.150">
    <property type="entry name" value="Vaccinia Virus protein VP39"/>
    <property type="match status" value="1"/>
</dbReference>
<dbReference type="HAMAP" id="MF_01057">
    <property type="entry name" value="tRNA_methyltr_TrmB"/>
    <property type="match status" value="1"/>
</dbReference>
<dbReference type="InterPro" id="IPR029063">
    <property type="entry name" value="SAM-dependent_MTases_sf"/>
</dbReference>
<dbReference type="InterPro" id="IPR003358">
    <property type="entry name" value="tRNA_(Gua-N-7)_MeTrfase_Trmb"/>
</dbReference>
<dbReference type="InterPro" id="IPR055361">
    <property type="entry name" value="tRNA_methyltr_TrmB_bact"/>
</dbReference>
<dbReference type="NCBIfam" id="TIGR00091">
    <property type="entry name" value="tRNA (guanosine(46)-N7)-methyltransferase TrmB"/>
    <property type="match status" value="1"/>
</dbReference>
<dbReference type="PANTHER" id="PTHR23417">
    <property type="entry name" value="3-DEOXY-D-MANNO-OCTULOSONIC-ACID TRANSFERASE/TRNA GUANINE-N 7 - -METHYLTRANSFERASE"/>
    <property type="match status" value="1"/>
</dbReference>
<dbReference type="PANTHER" id="PTHR23417:SF14">
    <property type="entry name" value="PENTACOTRIPEPTIDE-REPEAT REGION OF PRORP DOMAIN-CONTAINING PROTEIN"/>
    <property type="match status" value="1"/>
</dbReference>
<dbReference type="Pfam" id="PF02390">
    <property type="entry name" value="Methyltransf_4"/>
    <property type="match status" value="1"/>
</dbReference>
<dbReference type="SUPFAM" id="SSF53335">
    <property type="entry name" value="S-adenosyl-L-methionine-dependent methyltransferases"/>
    <property type="match status" value="1"/>
</dbReference>
<dbReference type="PROSITE" id="PS51625">
    <property type="entry name" value="SAM_MT_TRMB"/>
    <property type="match status" value="1"/>
</dbReference>
<accession>B2U7E2</accession>
<comment type="function">
    <text evidence="2">Catalyzes the formation of N(7)-methylguanine at position 46 (m7G46) in tRNA.</text>
</comment>
<comment type="catalytic activity">
    <reaction evidence="2">
        <text>guanosine(46) in tRNA + S-adenosyl-L-methionine = N(7)-methylguanosine(46) in tRNA + S-adenosyl-L-homocysteine</text>
        <dbReference type="Rhea" id="RHEA:42708"/>
        <dbReference type="Rhea" id="RHEA-COMP:10188"/>
        <dbReference type="Rhea" id="RHEA-COMP:10189"/>
        <dbReference type="ChEBI" id="CHEBI:57856"/>
        <dbReference type="ChEBI" id="CHEBI:59789"/>
        <dbReference type="ChEBI" id="CHEBI:74269"/>
        <dbReference type="ChEBI" id="CHEBI:74480"/>
        <dbReference type="EC" id="2.1.1.33"/>
    </reaction>
</comment>
<comment type="pathway">
    <text evidence="2">tRNA modification; N(7)-methylguanine-tRNA biosynthesis.</text>
</comment>
<comment type="similarity">
    <text evidence="2">Belongs to the class I-like SAM-binding methyltransferase superfamily. TrmB family.</text>
</comment>
<keyword id="KW-0489">Methyltransferase</keyword>
<keyword id="KW-0949">S-adenosyl-L-methionine</keyword>
<keyword id="KW-0808">Transferase</keyword>
<keyword id="KW-0819">tRNA processing</keyword>